<protein>
    <recommendedName>
        <fullName>Protein encore</fullName>
    </recommendedName>
</protein>
<name>ENC_DROME</name>
<accession>Q8MSX1</accession>
<accession>A8JNK0</accession>
<accession>B6IDK9</accession>
<accession>Q5BIH9</accession>
<accession>Q7KV61</accession>
<accession>Q9NGQ6</accession>
<accession>Q9VZM1</accession>
<evidence type="ECO:0000255" key="1">
    <source>
        <dbReference type="PROSITE-ProRule" id="PRU00382"/>
    </source>
</evidence>
<evidence type="ECO:0000255" key="2">
    <source>
        <dbReference type="PROSITE-ProRule" id="PRU01009"/>
    </source>
</evidence>
<evidence type="ECO:0000256" key="3">
    <source>
        <dbReference type="SAM" id="MobiDB-lite"/>
    </source>
</evidence>
<evidence type="ECO:0000269" key="4">
    <source>
    </source>
</evidence>
<evidence type="ECO:0000269" key="5">
    <source>
    </source>
</evidence>
<evidence type="ECO:0000269" key="6">
    <source>
    </source>
</evidence>
<evidence type="ECO:0000269" key="7">
    <source>
    </source>
</evidence>
<evidence type="ECO:0000303" key="8">
    <source>
    </source>
</evidence>
<evidence type="ECO:0000303" key="9">
    <source ref="4"/>
</evidence>
<evidence type="ECO:0000305" key="10"/>
<gene>
    <name type="primary">enc</name>
    <name type="ORF">CG10847</name>
</gene>
<proteinExistence type="evidence at protein level"/>
<keyword id="KW-0025">Alternative splicing</keyword>
<keyword id="KW-0963">Cytoplasm</keyword>
<keyword id="KW-0217">Developmental protein</keyword>
<keyword id="KW-0221">Differentiation</keyword>
<keyword id="KW-0896">Oogenesis</keyword>
<keyword id="KW-0597">Phosphoprotein</keyword>
<keyword id="KW-1185">Reference proteome</keyword>
<feature type="chain" id="PRO_0000086973" description="Protein encore">
    <location>
        <begin position="1"/>
        <end position="1818"/>
    </location>
</feature>
<feature type="domain" description="R3H" evidence="1">
    <location>
        <begin position="444"/>
        <end position="508"/>
    </location>
</feature>
<feature type="domain" description="SUZ" evidence="2">
    <location>
        <begin position="510"/>
        <end position="576"/>
    </location>
</feature>
<feature type="region of interest" description="Disordered" evidence="3">
    <location>
        <begin position="47"/>
        <end position="68"/>
    </location>
</feature>
<feature type="region of interest" description="Disordered" evidence="3">
    <location>
        <begin position="123"/>
        <end position="282"/>
    </location>
</feature>
<feature type="region of interest" description="Disordered" evidence="3">
    <location>
        <begin position="317"/>
        <end position="413"/>
    </location>
</feature>
<feature type="region of interest" description="Disordered" evidence="3">
    <location>
        <begin position="557"/>
        <end position="806"/>
    </location>
</feature>
<feature type="region of interest" description="Disordered" evidence="3">
    <location>
        <begin position="885"/>
        <end position="916"/>
    </location>
</feature>
<feature type="region of interest" description="Disordered" evidence="3">
    <location>
        <begin position="936"/>
        <end position="959"/>
    </location>
</feature>
<feature type="region of interest" description="Disordered" evidence="3">
    <location>
        <begin position="1176"/>
        <end position="1249"/>
    </location>
</feature>
<feature type="region of interest" description="Disordered" evidence="3">
    <location>
        <begin position="1332"/>
        <end position="1648"/>
    </location>
</feature>
<feature type="region of interest" description="Disordered" evidence="3">
    <location>
        <begin position="1684"/>
        <end position="1709"/>
    </location>
</feature>
<feature type="compositionally biased region" description="Gly residues" evidence="3">
    <location>
        <begin position="52"/>
        <end position="66"/>
    </location>
</feature>
<feature type="compositionally biased region" description="Polar residues" evidence="3">
    <location>
        <begin position="124"/>
        <end position="137"/>
    </location>
</feature>
<feature type="compositionally biased region" description="Basic residues" evidence="3">
    <location>
        <begin position="141"/>
        <end position="152"/>
    </location>
</feature>
<feature type="compositionally biased region" description="Low complexity" evidence="3">
    <location>
        <begin position="156"/>
        <end position="179"/>
    </location>
</feature>
<feature type="compositionally biased region" description="Low complexity" evidence="3">
    <location>
        <begin position="186"/>
        <end position="199"/>
    </location>
</feature>
<feature type="compositionally biased region" description="Low complexity" evidence="3">
    <location>
        <begin position="217"/>
        <end position="233"/>
    </location>
</feature>
<feature type="compositionally biased region" description="Low complexity" evidence="3">
    <location>
        <begin position="266"/>
        <end position="282"/>
    </location>
</feature>
<feature type="compositionally biased region" description="Basic and acidic residues" evidence="3">
    <location>
        <begin position="317"/>
        <end position="328"/>
    </location>
</feature>
<feature type="compositionally biased region" description="Basic and acidic residues" evidence="3">
    <location>
        <begin position="338"/>
        <end position="348"/>
    </location>
</feature>
<feature type="compositionally biased region" description="Low complexity" evidence="3">
    <location>
        <begin position="372"/>
        <end position="381"/>
    </location>
</feature>
<feature type="compositionally biased region" description="Low complexity" evidence="3">
    <location>
        <begin position="391"/>
        <end position="410"/>
    </location>
</feature>
<feature type="compositionally biased region" description="Basic and acidic residues" evidence="3">
    <location>
        <begin position="557"/>
        <end position="568"/>
    </location>
</feature>
<feature type="compositionally biased region" description="Low complexity" evidence="3">
    <location>
        <begin position="592"/>
        <end position="606"/>
    </location>
</feature>
<feature type="compositionally biased region" description="Gly residues" evidence="3">
    <location>
        <begin position="644"/>
        <end position="655"/>
    </location>
</feature>
<feature type="compositionally biased region" description="Polar residues" evidence="3">
    <location>
        <begin position="678"/>
        <end position="695"/>
    </location>
</feature>
<feature type="compositionally biased region" description="Low complexity" evidence="3">
    <location>
        <begin position="713"/>
        <end position="771"/>
    </location>
</feature>
<feature type="compositionally biased region" description="Polar residues" evidence="3">
    <location>
        <begin position="772"/>
        <end position="784"/>
    </location>
</feature>
<feature type="compositionally biased region" description="Low complexity" evidence="3">
    <location>
        <begin position="893"/>
        <end position="904"/>
    </location>
</feature>
<feature type="compositionally biased region" description="Low complexity" evidence="3">
    <location>
        <begin position="1176"/>
        <end position="1197"/>
    </location>
</feature>
<feature type="compositionally biased region" description="Polar residues" evidence="3">
    <location>
        <begin position="1220"/>
        <end position="1231"/>
    </location>
</feature>
<feature type="compositionally biased region" description="Low complexity" evidence="3">
    <location>
        <begin position="1381"/>
        <end position="1392"/>
    </location>
</feature>
<feature type="compositionally biased region" description="Polar residues" evidence="3">
    <location>
        <begin position="1430"/>
        <end position="1443"/>
    </location>
</feature>
<feature type="compositionally biased region" description="Low complexity" evidence="3">
    <location>
        <begin position="1503"/>
        <end position="1521"/>
    </location>
</feature>
<feature type="compositionally biased region" description="Polar residues" evidence="3">
    <location>
        <begin position="1554"/>
        <end position="1565"/>
    </location>
</feature>
<feature type="compositionally biased region" description="Polar residues" evidence="3">
    <location>
        <begin position="1579"/>
        <end position="1596"/>
    </location>
</feature>
<feature type="compositionally biased region" description="Low complexity" evidence="3">
    <location>
        <begin position="1608"/>
        <end position="1633"/>
    </location>
</feature>
<feature type="compositionally biased region" description="Gly residues" evidence="3">
    <location>
        <begin position="1684"/>
        <end position="1705"/>
    </location>
</feature>
<feature type="modified residue" description="Phosphoserine" evidence="6">
    <location>
        <position position="267"/>
    </location>
</feature>
<feature type="modified residue" description="Phosphoserine" evidence="6">
    <location>
        <position position="270"/>
    </location>
</feature>
<feature type="modified residue" description="Phosphoserine" evidence="6">
    <location>
        <position position="336"/>
    </location>
</feature>
<feature type="modified residue" description="Phosphoserine" evidence="6">
    <location>
        <position position="535"/>
    </location>
</feature>
<feature type="splice variant" id="VSP_032690" description="In isoform A." evidence="9">
    <original>R</original>
    <variation>RVFHQS</variation>
    <location>
        <position position="414"/>
    </location>
</feature>
<feature type="splice variant" id="VSP_009327" description="In isoform 2." evidence="8">
    <original>SNNSPNSIVGSQSNSAANTPNAAAPPPPQPQPTLVSHSGGFVVLDQTTGAAMNASPPSLYGGGGGPNAGISGGAGASGAAGSNGGHQPGGGGGARSHIPTAQLHHSAAAAAAAAAGSQQATAAVLSGVAAAAALGGYNPNGASGVYFKYGQTYFAHPSVALPNSRRSPSNDIRPQMAQVAGMYPTMMIQ</original>
    <variation>GYNPNGASGVYFKYGQTYFAHPSVALPNSRRSPSNDIRPQMAQVAGMYPTMMIQANDLHASLP</variation>
    <location>
        <begin position="1612"/>
        <end position="1800"/>
    </location>
</feature>
<feature type="sequence conflict" description="In Ref. 1; AAF68440." evidence="10" ref="1">
    <original>G</original>
    <variation>A</variation>
    <location>
        <position position="118"/>
    </location>
</feature>
<feature type="sequence conflict" description="In Ref. 1; AAF68440." evidence="10" ref="1">
    <location>
        <begin position="220"/>
        <end position="221"/>
    </location>
</feature>
<feature type="sequence conflict" description="In Ref. 1; AAF68440." evidence="10" ref="1">
    <original>KL</original>
    <variation>NV</variation>
    <location>
        <begin position="251"/>
        <end position="252"/>
    </location>
</feature>
<feature type="sequence conflict" description="In Ref. 1; AAF68440." evidence="10" ref="1">
    <original>F</original>
    <variation>Y</variation>
    <location>
        <position position="308"/>
    </location>
</feature>
<feature type="sequence conflict" description="In Ref. 1; AAF68440." evidence="10" ref="1">
    <original>G</original>
    <variation>D</variation>
    <location>
        <position position="577"/>
    </location>
</feature>
<feature type="sequence conflict" description="In Ref. 1; AAF68440." evidence="10" ref="1">
    <original>D</original>
    <variation>E</variation>
    <location>
        <position position="580"/>
    </location>
</feature>
<feature type="sequence conflict" description="In Ref. 1; AAF68440." evidence="10" ref="1">
    <original>A</original>
    <variation>G</variation>
    <location>
        <position position="709"/>
    </location>
</feature>
<feature type="sequence conflict" description="In Ref. 1; AAF68440." evidence="10" ref="1">
    <original>G</original>
    <variation>A</variation>
    <location>
        <position position="882"/>
    </location>
</feature>
<feature type="sequence conflict" description="In Ref. 1; AAF68440." evidence="10" ref="1">
    <original>I</original>
    <variation>V</variation>
    <location>
        <position position="1044"/>
    </location>
</feature>
<feature type="sequence conflict" description="In Ref. 1; AAF68440." evidence="10" ref="1">
    <original>A</original>
    <variation>T</variation>
    <location>
        <position position="1105"/>
    </location>
</feature>
<feature type="sequence conflict" description="In Ref. 1; AAF68440." evidence="10" ref="1">
    <original>P</original>
    <variation>Q</variation>
    <location>
        <position position="1523"/>
    </location>
</feature>
<feature type="sequence conflict" description="In Ref. 4; AAX33393." evidence="10" ref="4">
    <original>G</original>
    <variation>V</variation>
    <location>
        <position position="1761"/>
    </location>
</feature>
<reference key="1">
    <citation type="journal article" date="2000" name="Development">
        <title>Encore is a member of a novel family of proteins and affects multiple processes in Drosophila oogenesis.</title>
        <authorList>
            <person name="Van Buskirk C."/>
            <person name="Hawkins N.C."/>
            <person name="Schuepbach T."/>
        </authorList>
    </citation>
    <scope>NUCLEOTIDE SEQUENCE [MRNA] (ISOFORM 2)</scope>
</reference>
<reference key="2">
    <citation type="journal article" date="2000" name="Science">
        <title>The genome sequence of Drosophila melanogaster.</title>
        <authorList>
            <person name="Adams M.D."/>
            <person name="Celniker S.E."/>
            <person name="Holt R.A."/>
            <person name="Evans C.A."/>
            <person name="Gocayne J.D."/>
            <person name="Amanatides P.G."/>
            <person name="Scherer S.E."/>
            <person name="Li P.W."/>
            <person name="Hoskins R.A."/>
            <person name="Galle R.F."/>
            <person name="George R.A."/>
            <person name="Lewis S.E."/>
            <person name="Richards S."/>
            <person name="Ashburner M."/>
            <person name="Henderson S.N."/>
            <person name="Sutton G.G."/>
            <person name="Wortman J.R."/>
            <person name="Yandell M.D."/>
            <person name="Zhang Q."/>
            <person name="Chen L.X."/>
            <person name="Brandon R.C."/>
            <person name="Rogers Y.-H.C."/>
            <person name="Blazej R.G."/>
            <person name="Champe M."/>
            <person name="Pfeiffer B.D."/>
            <person name="Wan K.H."/>
            <person name="Doyle C."/>
            <person name="Baxter E.G."/>
            <person name="Helt G."/>
            <person name="Nelson C.R."/>
            <person name="Miklos G.L.G."/>
            <person name="Abril J.F."/>
            <person name="Agbayani A."/>
            <person name="An H.-J."/>
            <person name="Andrews-Pfannkoch C."/>
            <person name="Baldwin D."/>
            <person name="Ballew R.M."/>
            <person name="Basu A."/>
            <person name="Baxendale J."/>
            <person name="Bayraktaroglu L."/>
            <person name="Beasley E.M."/>
            <person name="Beeson K.Y."/>
            <person name="Benos P.V."/>
            <person name="Berman B.P."/>
            <person name="Bhandari D."/>
            <person name="Bolshakov S."/>
            <person name="Borkova D."/>
            <person name="Botchan M.R."/>
            <person name="Bouck J."/>
            <person name="Brokstein P."/>
            <person name="Brottier P."/>
            <person name="Burtis K.C."/>
            <person name="Busam D.A."/>
            <person name="Butler H."/>
            <person name="Cadieu E."/>
            <person name="Center A."/>
            <person name="Chandra I."/>
            <person name="Cherry J.M."/>
            <person name="Cawley S."/>
            <person name="Dahlke C."/>
            <person name="Davenport L.B."/>
            <person name="Davies P."/>
            <person name="de Pablos B."/>
            <person name="Delcher A."/>
            <person name="Deng Z."/>
            <person name="Mays A.D."/>
            <person name="Dew I."/>
            <person name="Dietz S.M."/>
            <person name="Dodson K."/>
            <person name="Doup L.E."/>
            <person name="Downes M."/>
            <person name="Dugan-Rocha S."/>
            <person name="Dunkov B.C."/>
            <person name="Dunn P."/>
            <person name="Durbin K.J."/>
            <person name="Evangelista C.C."/>
            <person name="Ferraz C."/>
            <person name="Ferriera S."/>
            <person name="Fleischmann W."/>
            <person name="Fosler C."/>
            <person name="Gabrielian A.E."/>
            <person name="Garg N.S."/>
            <person name="Gelbart W.M."/>
            <person name="Glasser K."/>
            <person name="Glodek A."/>
            <person name="Gong F."/>
            <person name="Gorrell J.H."/>
            <person name="Gu Z."/>
            <person name="Guan P."/>
            <person name="Harris M."/>
            <person name="Harris N.L."/>
            <person name="Harvey D.A."/>
            <person name="Heiman T.J."/>
            <person name="Hernandez J.R."/>
            <person name="Houck J."/>
            <person name="Hostin D."/>
            <person name="Houston K.A."/>
            <person name="Howland T.J."/>
            <person name="Wei M.-H."/>
            <person name="Ibegwam C."/>
            <person name="Jalali M."/>
            <person name="Kalush F."/>
            <person name="Karpen G.H."/>
            <person name="Ke Z."/>
            <person name="Kennison J.A."/>
            <person name="Ketchum K.A."/>
            <person name="Kimmel B.E."/>
            <person name="Kodira C.D."/>
            <person name="Kraft C.L."/>
            <person name="Kravitz S."/>
            <person name="Kulp D."/>
            <person name="Lai Z."/>
            <person name="Lasko P."/>
            <person name="Lei Y."/>
            <person name="Levitsky A.A."/>
            <person name="Li J.H."/>
            <person name="Li Z."/>
            <person name="Liang Y."/>
            <person name="Lin X."/>
            <person name="Liu X."/>
            <person name="Mattei B."/>
            <person name="McIntosh T.C."/>
            <person name="McLeod M.P."/>
            <person name="McPherson D."/>
            <person name="Merkulov G."/>
            <person name="Milshina N.V."/>
            <person name="Mobarry C."/>
            <person name="Morris J."/>
            <person name="Moshrefi A."/>
            <person name="Mount S.M."/>
            <person name="Moy M."/>
            <person name="Murphy B."/>
            <person name="Murphy L."/>
            <person name="Muzny D.M."/>
            <person name="Nelson D.L."/>
            <person name="Nelson D.R."/>
            <person name="Nelson K.A."/>
            <person name="Nixon K."/>
            <person name="Nusskern D.R."/>
            <person name="Pacleb J.M."/>
            <person name="Palazzolo M."/>
            <person name="Pittman G.S."/>
            <person name="Pan S."/>
            <person name="Pollard J."/>
            <person name="Puri V."/>
            <person name="Reese M.G."/>
            <person name="Reinert K."/>
            <person name="Remington K."/>
            <person name="Saunders R.D.C."/>
            <person name="Scheeler F."/>
            <person name="Shen H."/>
            <person name="Shue B.C."/>
            <person name="Siden-Kiamos I."/>
            <person name="Simpson M."/>
            <person name="Skupski M.P."/>
            <person name="Smith T.J."/>
            <person name="Spier E."/>
            <person name="Spradling A.C."/>
            <person name="Stapleton M."/>
            <person name="Strong R."/>
            <person name="Sun E."/>
            <person name="Svirskas R."/>
            <person name="Tector C."/>
            <person name="Turner R."/>
            <person name="Venter E."/>
            <person name="Wang A.H."/>
            <person name="Wang X."/>
            <person name="Wang Z.-Y."/>
            <person name="Wassarman D.A."/>
            <person name="Weinstock G.M."/>
            <person name="Weissenbach J."/>
            <person name="Williams S.M."/>
            <person name="Woodage T."/>
            <person name="Worley K.C."/>
            <person name="Wu D."/>
            <person name="Yang S."/>
            <person name="Yao Q.A."/>
            <person name="Ye J."/>
            <person name="Yeh R.-F."/>
            <person name="Zaveri J.S."/>
            <person name="Zhan M."/>
            <person name="Zhang G."/>
            <person name="Zhao Q."/>
            <person name="Zheng L."/>
            <person name="Zheng X.H."/>
            <person name="Zhong F.N."/>
            <person name="Zhong W."/>
            <person name="Zhou X."/>
            <person name="Zhu S.C."/>
            <person name="Zhu X."/>
            <person name="Smith H.O."/>
            <person name="Gibbs R.A."/>
            <person name="Myers E.W."/>
            <person name="Rubin G.M."/>
            <person name="Venter J.C."/>
        </authorList>
    </citation>
    <scope>NUCLEOTIDE SEQUENCE [LARGE SCALE GENOMIC DNA]</scope>
    <source>
        <strain>Berkeley</strain>
    </source>
</reference>
<reference key="3">
    <citation type="journal article" date="2002" name="Genome Biol.">
        <title>Annotation of the Drosophila melanogaster euchromatic genome: a systematic review.</title>
        <authorList>
            <person name="Misra S."/>
            <person name="Crosby M.A."/>
            <person name="Mungall C.J."/>
            <person name="Matthews B.B."/>
            <person name="Campbell K.S."/>
            <person name="Hradecky P."/>
            <person name="Huang Y."/>
            <person name="Kaminker J.S."/>
            <person name="Millburn G.H."/>
            <person name="Prochnik S.E."/>
            <person name="Smith C.D."/>
            <person name="Tupy J.L."/>
            <person name="Whitfield E.J."/>
            <person name="Bayraktaroglu L."/>
            <person name="Berman B.P."/>
            <person name="Bettencourt B.R."/>
            <person name="Celniker S.E."/>
            <person name="de Grey A.D.N.J."/>
            <person name="Drysdale R.A."/>
            <person name="Harris N.L."/>
            <person name="Richter J."/>
            <person name="Russo S."/>
            <person name="Schroeder A.J."/>
            <person name="Shu S.Q."/>
            <person name="Stapleton M."/>
            <person name="Yamada C."/>
            <person name="Ashburner M."/>
            <person name="Gelbart W.M."/>
            <person name="Rubin G.M."/>
            <person name="Lewis S.E."/>
        </authorList>
    </citation>
    <scope>GENOME REANNOTATION</scope>
    <scope>ALTERNATIVE SPLICING</scope>
    <source>
        <strain>Berkeley</strain>
    </source>
</reference>
<reference key="4">
    <citation type="submission" date="2008-11" db="EMBL/GenBank/DDBJ databases">
        <authorList>
            <person name="Stapleton M."/>
            <person name="Booth B."/>
            <person name="Carlson J.W."/>
            <person name="Chavez C."/>
            <person name="Frise E."/>
            <person name="George R.A."/>
            <person name="Pacleb J.M."/>
            <person name="Park S."/>
            <person name="Wan K.H."/>
            <person name="Yu C."/>
            <person name="Rubin G.M."/>
            <person name="Celniker S.E."/>
        </authorList>
    </citation>
    <scope>NUCLEOTIDE SEQUENCE [LARGE SCALE MRNA] (ISOFORM A)</scope>
    <source>
        <strain>Berkeley</strain>
        <tissue>Embryo</tissue>
    </source>
</reference>
<reference key="5">
    <citation type="journal article" date="2002" name="Genome Biol.">
        <title>A Drosophila full-length cDNA resource.</title>
        <authorList>
            <person name="Stapleton M."/>
            <person name="Carlson J.W."/>
            <person name="Brokstein P."/>
            <person name="Yu C."/>
            <person name="Champe M."/>
            <person name="George R.A."/>
            <person name="Guarin H."/>
            <person name="Kronmiller B."/>
            <person name="Pacleb J.M."/>
            <person name="Park S."/>
            <person name="Wan K.H."/>
            <person name="Rubin G.M."/>
            <person name="Celniker S.E."/>
        </authorList>
    </citation>
    <scope>NUCLEOTIDE SEQUENCE [LARGE SCALE MRNA] OF 1191-1818 (ISOFORM B)</scope>
    <source>
        <strain>Berkeley</strain>
        <tissue>Embryo</tissue>
    </source>
</reference>
<reference key="6">
    <citation type="journal article" date="1997" name="Development">
        <title>Post-transcriptional regulation of gurken by encore is required for axis determination in Drosophila.</title>
        <authorList>
            <person name="Hawkins N.C."/>
            <person name="Van Buskirk C."/>
            <person name="Grossniklaus U."/>
            <person name="Schuepbach T."/>
        </authorList>
    </citation>
    <scope>FUNCTION</scope>
</reference>
<reference key="7">
    <citation type="journal article" date="2002" name="Dev. Cell">
        <title>Half pint regulates alternative splice site selection in Drosophila.</title>
        <authorList>
            <person name="Van Buskirk C."/>
            <person name="Schuepbach T."/>
        </authorList>
    </citation>
    <scope>INTERACTION WITH HFP</scope>
</reference>
<reference key="8">
    <citation type="journal article" date="2003" name="Development">
        <title>Encore facilitates SCF-Ubiquitin-proteasome-dependent proteolysis during Drosophila oogenesis.</title>
        <authorList>
            <person name="Ohlmeyer J.T."/>
            <person name="Schuepbach T."/>
        </authorList>
    </citation>
    <scope>FUNCTION</scope>
    <scope>INTERACTION WITH CYCE; CUL1 AND THE SCF-PROTEASOME COMPLEX</scope>
</reference>
<reference key="9">
    <citation type="journal article" date="2008" name="J. Proteome Res.">
        <title>Phosphoproteome analysis of Drosophila melanogaster embryos.</title>
        <authorList>
            <person name="Zhai B."/>
            <person name="Villen J."/>
            <person name="Beausoleil S.A."/>
            <person name="Mintseris J."/>
            <person name="Gygi S.P."/>
        </authorList>
    </citation>
    <scope>PHOSPHORYLATION [LARGE SCALE ANALYSIS] AT SER-267; SER-270; SER-336 AND SER-535</scope>
    <scope>IDENTIFICATION BY MASS SPECTROMETRY</scope>
    <source>
        <tissue>Embryo</tissue>
    </source>
</reference>
<sequence>MSSTKSQVALATNIPTNLSSAASASTAAAAAAVVVVASANAAVASSANSSGVGSGSGPGPGSGAGVSGPVAAGTATAVATGSTVTAATSVAATTSTSVATISTSCSSSSINNINNNCGEECQSAAGSSNLGRQNSFGNRRGNMKGKHLTRSHAMRESTSPPRTPTPRAASEQQQQQLQGEQHEHNNNNNINSSSKAQSAGRGNSPLMETPAVIVTSQQPQQQQQQQQQQQQSVPPKPQQNVPLSNEAEFPKLSPPKKSGGQHNRTNSNGSGMEFNNNNNSSNKKFVVDMKANGLDNKPHNNSSTGVIFNSGMNYKAAERHDRHERHEMSSQNSNLSNNHDEEPYHYEPRGGGGGKKHRANTNAKGNKPRLKNLGGSSSGSIDLGGGGGNGNCNNMSNNGQSNNSSNNTSGFISRENSSEQYTDYGGTDLLVFFRDTLNKNPKDRNILLKIEKDLIDFVQENSRGCEYRFPPASSYNRMLIHRTAAFFGMEHNVDTETQQCVIVAVAKNTRIPEIRFQSLVRDDARKSILKRDTHSFDEVRQSPYLCPLSLDRKAKSFEEREEDYDRARSRIFSRTGGNHDGYSGGGGDEECYGGWEQQQQQQKQSQPPRPKRPNGKMLQMQNSTESRDGMRSGGAVPKSHNFGNYGGPPSSGGPGNNSLPRGDSTNSIKSGRGGFVKQDSTGSTPWRLSPSSSGSIYHYDPSNLPPNQALQHSGNQYQSQNQGNSSSGGYNNYRKSSPHQQQQSQQQQQSQQHHQQQLQQPQQLHQQSSQQYATTELSCSSTESYAEEEAQSPGMECSEGYESYEQQSLPVQQQLSGNGDSASTKGDDCDSLASATACLSITTSTSTKNYDRIEVQKYKNQATSPNIPACCAVGEKLELEAGLPQEQEQEPMAGPSSSGSATSSVGITELPSSQTPLPMVNQVNCDLQSVSPSTTPYSQCEVKTPSQNHAPSAAVEEPKTTTWTYTQSYQAPDGSTVFHTTTTPNGAAPYCATTYQQGPDGSIYAVPQGMVYAAYPQPGVGTAGGASQPLFQLTTSSHPPAQTIFASPEAGAEIPGGTYMIPVFDPAQQPREGLIPAQAIYQTGPGGPGATTVMPMATAAAYPTAQFATAAPNGAPIYQAPLIYSSEPGGGAQLQQLPMAPYPIQYSYPYYHPISYYVPQQAVAAAPMVASQPQVGQAPMQQQAPHTGAGTTTGPPTVVSVSGQQHHQPHQQHHQQQQHSSNGSVVTSSAYGTRVKRTPGGGSIHYNPSYTPSSVAHAGGAHHPSAGSAQIIAAPAASTTTYHALPTLTLAHGGPATGTDLSGAGGAHVYALPAQHALIPTNIFPYAAAAAAAAGGPGGPPTTPQVVQQAPPPPPQSAPHHALITAAPFYPANGGNMDQGASQSAPSTPAAPGRQAPLFSTPPAPNNGSSGSSSAGGGGNSGGYHSNSSTPHYYQGQNSNEGYTSPYEKRNHGGGASGAHSVGVRKPYHPGGYNPRHSVPLGGIPSGAKTPLLNSNNEPTPRASPSSVSLGGASSSGGANSYPHRGPPPHTMGVKRDNKPNQLPLISGPPPSYAANSSPGVSSYESKPPVRLNAGAASFRSQKSMNQDYRRSVSQRNSPSANGGGSGSHESSNNSPNSIVGSQSNSAANTPNAAAPPPPQPQPTLVSHSGGFVVLDQTTGAAMNASPPSLYGGGGGPNAGISGGAGASGAAGSNGGHQPGGGGGARSHIPTAQLHHSAAAAAAAAAGSQQATAAVLSGVAAAAALGGYNPNGASGVYFKYGQTYFAHPSVALPNSRRSPSNDIRPQMAQVAGMYPTMMIQARHPSRHPNPNYKGSRPR</sequence>
<dbReference type="EMBL" id="AF243382">
    <property type="protein sequence ID" value="AAF68440.1"/>
    <property type="status" value="ALT_INIT"/>
    <property type="molecule type" value="mRNA"/>
</dbReference>
<dbReference type="EMBL" id="AE014296">
    <property type="protein sequence ID" value="AAF47799.2"/>
    <property type="molecule type" value="Genomic_DNA"/>
</dbReference>
<dbReference type="EMBL" id="AE014296">
    <property type="protein sequence ID" value="AAS64963.1"/>
    <property type="molecule type" value="Genomic_DNA"/>
</dbReference>
<dbReference type="EMBL" id="AE014296">
    <property type="protein sequence ID" value="ABW08455.1"/>
    <property type="molecule type" value="Genomic_DNA"/>
</dbReference>
<dbReference type="EMBL" id="BT021245">
    <property type="protein sequence ID" value="AAX33393.1"/>
    <property type="molecule type" value="mRNA"/>
</dbReference>
<dbReference type="EMBL" id="BT050449">
    <property type="protein sequence ID" value="ACJ13156.1"/>
    <property type="molecule type" value="mRNA"/>
</dbReference>
<dbReference type="EMBL" id="AY118518">
    <property type="protein sequence ID" value="AAM49887.1"/>
    <property type="status" value="ALT_INIT"/>
    <property type="molecule type" value="mRNA"/>
</dbReference>
<dbReference type="RefSeq" id="NP_001097496.1">
    <molecule id="Q8MSX1-1"/>
    <property type="nucleotide sequence ID" value="NM_001104026.2"/>
</dbReference>
<dbReference type="RefSeq" id="NP_524765.2">
    <molecule id="Q8MSX1-1"/>
    <property type="nucleotide sequence ID" value="NM_080026.3"/>
</dbReference>
<dbReference type="RefSeq" id="NP_995992.1">
    <molecule id="Q8MSX1-3"/>
    <property type="nucleotide sequence ID" value="NM_206270.2"/>
</dbReference>
<dbReference type="SMR" id="Q8MSX1"/>
<dbReference type="BioGRID" id="69121">
    <property type="interactions" value="31"/>
</dbReference>
<dbReference type="FunCoup" id="Q8MSX1">
    <property type="interactions" value="241"/>
</dbReference>
<dbReference type="IntAct" id="Q8MSX1">
    <property type="interactions" value="86"/>
</dbReference>
<dbReference type="STRING" id="7227.FBpp0305410"/>
<dbReference type="GlyGen" id="Q8MSX1">
    <property type="glycosylation" value="1 site"/>
</dbReference>
<dbReference type="iPTMnet" id="Q8MSX1"/>
<dbReference type="PaxDb" id="7227-FBpp0305410"/>
<dbReference type="EnsemblMetazoa" id="FBtr0073152">
    <molecule id="Q8MSX1-1"/>
    <property type="protein sequence ID" value="FBpp0073011"/>
    <property type="gene ID" value="FBgn0004875"/>
</dbReference>
<dbReference type="EnsemblMetazoa" id="FBtr0073153">
    <molecule id="Q8MSX1-3"/>
    <property type="protein sequence ID" value="FBpp0089267"/>
    <property type="gene ID" value="FBgn0004875"/>
</dbReference>
<dbReference type="EnsemblMetazoa" id="FBtr0112844">
    <molecule id="Q8MSX1-1"/>
    <property type="protein sequence ID" value="FBpp0111757"/>
    <property type="gene ID" value="FBgn0004875"/>
</dbReference>
<dbReference type="GeneID" id="44543"/>
<dbReference type="KEGG" id="dme:Dmel_CG10847"/>
<dbReference type="UCSC" id="CG10847-RA">
    <molecule id="Q8MSX1-1"/>
    <property type="organism name" value="d. melanogaster"/>
</dbReference>
<dbReference type="AGR" id="FB:FBgn0004875"/>
<dbReference type="CTD" id="104374"/>
<dbReference type="FlyBase" id="FBgn0004875">
    <property type="gene designation" value="enc"/>
</dbReference>
<dbReference type="VEuPathDB" id="VectorBase:FBgn0004875"/>
<dbReference type="eggNOG" id="KOG2953">
    <property type="taxonomic scope" value="Eukaryota"/>
</dbReference>
<dbReference type="GeneTree" id="ENSGT00940000168363"/>
<dbReference type="InParanoid" id="Q8MSX1"/>
<dbReference type="OrthoDB" id="278430at2759"/>
<dbReference type="SignaLink" id="Q8MSX1"/>
<dbReference type="BioGRID-ORCS" id="44543">
    <property type="hits" value="0 hits in 3 CRISPR screens"/>
</dbReference>
<dbReference type="GenomeRNAi" id="44543"/>
<dbReference type="PRO" id="PR:Q8MSX1"/>
<dbReference type="Proteomes" id="UP000000803">
    <property type="component" value="Chromosome 3L"/>
</dbReference>
<dbReference type="Bgee" id="FBgn0004875">
    <property type="expression patterns" value="Expressed in lamina monopolar neuron L3 (Drosophila) in insect head and 269 other cell types or tissues"/>
</dbReference>
<dbReference type="ExpressionAtlas" id="Q8MSX1">
    <property type="expression patterns" value="baseline and differential"/>
</dbReference>
<dbReference type="GO" id="GO:0005737">
    <property type="term" value="C:cytoplasm"/>
    <property type="evidence" value="ECO:0000314"/>
    <property type="project" value="FlyBase"/>
</dbReference>
<dbReference type="GO" id="GO:0003676">
    <property type="term" value="F:nucleic acid binding"/>
    <property type="evidence" value="ECO:0007669"/>
    <property type="project" value="InterPro"/>
</dbReference>
<dbReference type="GO" id="GO:0007282">
    <property type="term" value="P:cystoblast division"/>
    <property type="evidence" value="ECO:0000315"/>
    <property type="project" value="FlyBase"/>
</dbReference>
<dbReference type="GO" id="GO:0048134">
    <property type="term" value="P:germ-line cyst formation"/>
    <property type="evidence" value="ECO:0000304"/>
    <property type="project" value="FlyBase"/>
</dbReference>
<dbReference type="GO" id="GO:0007293">
    <property type="term" value="P:germarium-derived egg chamber formation"/>
    <property type="evidence" value="ECO:0000315"/>
    <property type="project" value="FlyBase"/>
</dbReference>
<dbReference type="GO" id="GO:0007294">
    <property type="term" value="P:germarium-derived oocyte fate determination"/>
    <property type="evidence" value="ECO:0000315"/>
    <property type="project" value="FlyBase"/>
</dbReference>
<dbReference type="GO" id="GO:0007310">
    <property type="term" value="P:oocyte dorsal/ventral axis specification"/>
    <property type="evidence" value="ECO:0000304"/>
    <property type="project" value="FlyBase"/>
</dbReference>
<dbReference type="GO" id="GO:0030717">
    <property type="term" value="P:oocyte karyosome formation"/>
    <property type="evidence" value="ECO:0000304"/>
    <property type="project" value="FlyBase"/>
</dbReference>
<dbReference type="GO" id="GO:0048477">
    <property type="term" value="P:oogenesis"/>
    <property type="evidence" value="ECO:0000315"/>
    <property type="project" value="FlyBase"/>
</dbReference>
<dbReference type="GO" id="GO:0007317">
    <property type="term" value="P:regulation of pole plasm oskar mRNA localization"/>
    <property type="evidence" value="ECO:0000304"/>
    <property type="project" value="FlyBase"/>
</dbReference>
<dbReference type="CDD" id="cd02642">
    <property type="entry name" value="R3H_encore_like"/>
    <property type="match status" value="1"/>
</dbReference>
<dbReference type="Gene3D" id="3.30.1370.50">
    <property type="entry name" value="R3H-like domain"/>
    <property type="match status" value="1"/>
</dbReference>
<dbReference type="InterPro" id="IPR001374">
    <property type="entry name" value="R3H_dom"/>
</dbReference>
<dbReference type="InterPro" id="IPR036867">
    <property type="entry name" value="R3H_dom_sf"/>
</dbReference>
<dbReference type="InterPro" id="IPR051937">
    <property type="entry name" value="R3H_domain_containing"/>
</dbReference>
<dbReference type="InterPro" id="IPR024771">
    <property type="entry name" value="SUZ"/>
</dbReference>
<dbReference type="PANTHER" id="PTHR15672">
    <property type="entry name" value="CAMP-REGULATED PHOSPHOPROTEIN 21 RELATED R3H DOMAIN CONTAINING PROTEIN"/>
    <property type="match status" value="1"/>
</dbReference>
<dbReference type="PANTHER" id="PTHR15672:SF8">
    <property type="entry name" value="PROTEIN ENCORE"/>
    <property type="match status" value="1"/>
</dbReference>
<dbReference type="Pfam" id="PF01424">
    <property type="entry name" value="R3H"/>
    <property type="match status" value="1"/>
</dbReference>
<dbReference type="Pfam" id="PF12752">
    <property type="entry name" value="SUZ"/>
    <property type="match status" value="1"/>
</dbReference>
<dbReference type="SMART" id="SM00393">
    <property type="entry name" value="R3H"/>
    <property type="match status" value="1"/>
</dbReference>
<dbReference type="SUPFAM" id="SSF82708">
    <property type="entry name" value="R3H domain"/>
    <property type="match status" value="1"/>
</dbReference>
<dbReference type="PROSITE" id="PS51061">
    <property type="entry name" value="R3H"/>
    <property type="match status" value="1"/>
</dbReference>
<dbReference type="PROSITE" id="PS51673">
    <property type="entry name" value="SUZ"/>
    <property type="match status" value="1"/>
</dbReference>
<organism>
    <name type="scientific">Drosophila melanogaster</name>
    <name type="common">Fruit fly</name>
    <dbReference type="NCBI Taxonomy" id="7227"/>
    <lineage>
        <taxon>Eukaryota</taxon>
        <taxon>Metazoa</taxon>
        <taxon>Ecdysozoa</taxon>
        <taxon>Arthropoda</taxon>
        <taxon>Hexapoda</taxon>
        <taxon>Insecta</taxon>
        <taxon>Pterygota</taxon>
        <taxon>Neoptera</taxon>
        <taxon>Endopterygota</taxon>
        <taxon>Diptera</taxon>
        <taxon>Brachycera</taxon>
        <taxon>Muscomorpha</taxon>
        <taxon>Ephydroidea</taxon>
        <taxon>Drosophilidae</taxon>
        <taxon>Drosophila</taxon>
        <taxon>Sophophora</taxon>
    </lineage>
</organism>
<comment type="function">
    <text evidence="5 7">Required for the regulation of germline mitosis, karyosome formation, and establishment of dorsoventral (DS) polarity of the egg and embryo. Involved in proper grk mRNA localization and translation in the oocyte. May control germline mitosis by facilitating the cyclin E (CycE) proteolysis by the SCF-ubiquitin-proteasome complex.</text>
</comment>
<comment type="subunit">
    <text evidence="4 5">Interacts with hfp; however, given the nuclear localization of hfp, the relevance of such interaction is unclear. Interacts with CycE, Cul1, and the SCF-proteasome complex.</text>
</comment>
<comment type="subcellular location">
    <subcellularLocation>
        <location>Cytoplasm</location>
    </subcellularLocation>
    <text>Colocalizes with grk.</text>
</comment>
<comment type="alternative products">
    <event type="alternative splicing"/>
    <isoform>
        <id>Q8MSX1-1</id>
        <name>B</name>
        <name>D</name>
        <sequence type="displayed"/>
    </isoform>
    <isoform>
        <id>Q8MSX1-2</id>
        <name>2</name>
        <sequence type="described" ref="VSP_009327"/>
    </isoform>
    <isoform>
        <id>Q8MSX1-3</id>
        <name>A</name>
        <sequence type="described" ref="VSP_032690"/>
    </isoform>
</comment>
<comment type="tissue specificity">
    <text>Expressed in all germline cells of the germarium including the stem cells and dividing cystocytes.</text>
</comment>
<comment type="developmental stage">
    <text>In the germarium, it begins to accumulate preferentially within the future oocyte shortly after formation of the 16-cell cyst. In midoogenesis, it can be seen transiently at the posterior edge of the oocyte, but by stage 9 assumes an anterior localization, and appears to be more concentrated at the dorsal side of the oocyte, above the oocyte nucleus. This pattern of localization is similar to that seen for grk mRNA and protein, though not tightly restricted to the dorsal side.</text>
</comment>
<comment type="miscellaneous">
    <molecule>Isoform 2</molecule>
    <text evidence="10">Splicing donor and acceptor sites between exon 10 and exon 11 are not canonical.</text>
</comment>
<comment type="caution">
    <text evidence="10">It is uncertain whether Met-1 or Met-143 is the initiator.</text>
</comment>
<comment type="sequence caution" evidence="10">
    <conflict type="erroneous initiation">
        <sequence resource="EMBL-CDS" id="AAF68440"/>
    </conflict>
</comment>
<comment type="sequence caution" evidence="10">
    <conflict type="erroneous initiation">
        <sequence resource="EMBL-CDS" id="AAM49887"/>
    </conflict>
</comment>